<reference key="1">
    <citation type="journal article" date="2001" name="Biochem. Biophys. Res. Commun.">
        <title>PIST: a novel PDZ/coiled-coil domain binding partner for the rho-family GTPase TC10.</title>
        <authorList>
            <person name="Neudauer C.L."/>
            <person name="Joberty G."/>
            <person name="Macara I.G."/>
        </authorList>
    </citation>
    <scope>NUCLEOTIDE SEQUENCE [MRNA] (ISOFORM 2)</scope>
    <scope>OLIGOMERIZATION</scope>
    <scope>INTERACTION WITH RHOQ</scope>
    <source>
        <tissue>Embryo</tissue>
    </source>
</reference>
<reference key="2">
    <citation type="journal article" date="2001" name="Biochem. Biophys. Res. Commun.">
        <title>Identification of a PDZ domain containing Golgi protein, GOPC, as an interaction partner of frizzled.</title>
        <authorList>
            <person name="Yao R."/>
            <person name="Maeda T."/>
            <person name="Takada S."/>
            <person name="Noda T."/>
        </authorList>
    </citation>
    <scope>NUCLEOTIDE SEQUENCE [MRNA] (ISOFORM 2)</scope>
    <scope>DOMAIN</scope>
    <scope>OLIGOMERIZATION</scope>
    <scope>SUBCELLULAR LOCATION</scope>
    <scope>INTERACTION WITH FZD5 AND FZD8</scope>
    <source>
        <tissue>Kidney</tissue>
    </source>
</reference>
<reference key="3">
    <citation type="journal article" date="2005" name="Science">
        <title>The transcriptional landscape of the mammalian genome.</title>
        <authorList>
            <person name="Carninci P."/>
            <person name="Kasukawa T."/>
            <person name="Katayama S."/>
            <person name="Gough J."/>
            <person name="Frith M.C."/>
            <person name="Maeda N."/>
            <person name="Oyama R."/>
            <person name="Ravasi T."/>
            <person name="Lenhard B."/>
            <person name="Wells C."/>
            <person name="Kodzius R."/>
            <person name="Shimokawa K."/>
            <person name="Bajic V.B."/>
            <person name="Brenner S.E."/>
            <person name="Batalov S."/>
            <person name="Forrest A.R."/>
            <person name="Zavolan M."/>
            <person name="Davis M.J."/>
            <person name="Wilming L.G."/>
            <person name="Aidinis V."/>
            <person name="Allen J.E."/>
            <person name="Ambesi-Impiombato A."/>
            <person name="Apweiler R."/>
            <person name="Aturaliya R.N."/>
            <person name="Bailey T.L."/>
            <person name="Bansal M."/>
            <person name="Baxter L."/>
            <person name="Beisel K.W."/>
            <person name="Bersano T."/>
            <person name="Bono H."/>
            <person name="Chalk A.M."/>
            <person name="Chiu K.P."/>
            <person name="Choudhary V."/>
            <person name="Christoffels A."/>
            <person name="Clutterbuck D.R."/>
            <person name="Crowe M.L."/>
            <person name="Dalla E."/>
            <person name="Dalrymple B.P."/>
            <person name="de Bono B."/>
            <person name="Della Gatta G."/>
            <person name="di Bernardo D."/>
            <person name="Down T."/>
            <person name="Engstrom P."/>
            <person name="Fagiolini M."/>
            <person name="Faulkner G."/>
            <person name="Fletcher C.F."/>
            <person name="Fukushima T."/>
            <person name="Furuno M."/>
            <person name="Futaki S."/>
            <person name="Gariboldi M."/>
            <person name="Georgii-Hemming P."/>
            <person name="Gingeras T.R."/>
            <person name="Gojobori T."/>
            <person name="Green R.E."/>
            <person name="Gustincich S."/>
            <person name="Harbers M."/>
            <person name="Hayashi Y."/>
            <person name="Hensch T.K."/>
            <person name="Hirokawa N."/>
            <person name="Hill D."/>
            <person name="Huminiecki L."/>
            <person name="Iacono M."/>
            <person name="Ikeo K."/>
            <person name="Iwama A."/>
            <person name="Ishikawa T."/>
            <person name="Jakt M."/>
            <person name="Kanapin A."/>
            <person name="Katoh M."/>
            <person name="Kawasawa Y."/>
            <person name="Kelso J."/>
            <person name="Kitamura H."/>
            <person name="Kitano H."/>
            <person name="Kollias G."/>
            <person name="Krishnan S.P."/>
            <person name="Kruger A."/>
            <person name="Kummerfeld S.K."/>
            <person name="Kurochkin I.V."/>
            <person name="Lareau L.F."/>
            <person name="Lazarevic D."/>
            <person name="Lipovich L."/>
            <person name="Liu J."/>
            <person name="Liuni S."/>
            <person name="McWilliam S."/>
            <person name="Madan Babu M."/>
            <person name="Madera M."/>
            <person name="Marchionni L."/>
            <person name="Matsuda H."/>
            <person name="Matsuzawa S."/>
            <person name="Miki H."/>
            <person name="Mignone F."/>
            <person name="Miyake S."/>
            <person name="Morris K."/>
            <person name="Mottagui-Tabar S."/>
            <person name="Mulder N."/>
            <person name="Nakano N."/>
            <person name="Nakauchi H."/>
            <person name="Ng P."/>
            <person name="Nilsson R."/>
            <person name="Nishiguchi S."/>
            <person name="Nishikawa S."/>
            <person name="Nori F."/>
            <person name="Ohara O."/>
            <person name="Okazaki Y."/>
            <person name="Orlando V."/>
            <person name="Pang K.C."/>
            <person name="Pavan W.J."/>
            <person name="Pavesi G."/>
            <person name="Pesole G."/>
            <person name="Petrovsky N."/>
            <person name="Piazza S."/>
            <person name="Reed J."/>
            <person name="Reid J.F."/>
            <person name="Ring B.Z."/>
            <person name="Ringwald M."/>
            <person name="Rost B."/>
            <person name="Ruan Y."/>
            <person name="Salzberg S.L."/>
            <person name="Sandelin A."/>
            <person name="Schneider C."/>
            <person name="Schoenbach C."/>
            <person name="Sekiguchi K."/>
            <person name="Semple C.A."/>
            <person name="Seno S."/>
            <person name="Sessa L."/>
            <person name="Sheng Y."/>
            <person name="Shibata Y."/>
            <person name="Shimada H."/>
            <person name="Shimada K."/>
            <person name="Silva D."/>
            <person name="Sinclair B."/>
            <person name="Sperling S."/>
            <person name="Stupka E."/>
            <person name="Sugiura K."/>
            <person name="Sultana R."/>
            <person name="Takenaka Y."/>
            <person name="Taki K."/>
            <person name="Tammoja K."/>
            <person name="Tan S.L."/>
            <person name="Tang S."/>
            <person name="Taylor M.S."/>
            <person name="Tegner J."/>
            <person name="Teichmann S.A."/>
            <person name="Ueda H.R."/>
            <person name="van Nimwegen E."/>
            <person name="Verardo R."/>
            <person name="Wei C.L."/>
            <person name="Yagi K."/>
            <person name="Yamanishi H."/>
            <person name="Zabarovsky E."/>
            <person name="Zhu S."/>
            <person name="Zimmer A."/>
            <person name="Hide W."/>
            <person name="Bult C."/>
            <person name="Grimmond S.M."/>
            <person name="Teasdale R.D."/>
            <person name="Liu E.T."/>
            <person name="Brusic V."/>
            <person name="Quackenbush J."/>
            <person name="Wahlestedt C."/>
            <person name="Mattick J.S."/>
            <person name="Hume D.A."/>
            <person name="Kai C."/>
            <person name="Sasaki D."/>
            <person name="Tomaru Y."/>
            <person name="Fukuda S."/>
            <person name="Kanamori-Katayama M."/>
            <person name="Suzuki M."/>
            <person name="Aoki J."/>
            <person name="Arakawa T."/>
            <person name="Iida J."/>
            <person name="Imamura K."/>
            <person name="Itoh M."/>
            <person name="Kato T."/>
            <person name="Kawaji H."/>
            <person name="Kawagashira N."/>
            <person name="Kawashima T."/>
            <person name="Kojima M."/>
            <person name="Kondo S."/>
            <person name="Konno H."/>
            <person name="Nakano K."/>
            <person name="Ninomiya N."/>
            <person name="Nishio T."/>
            <person name="Okada M."/>
            <person name="Plessy C."/>
            <person name="Shibata K."/>
            <person name="Shiraki T."/>
            <person name="Suzuki S."/>
            <person name="Tagami M."/>
            <person name="Waki K."/>
            <person name="Watahiki A."/>
            <person name="Okamura-Oho Y."/>
            <person name="Suzuki H."/>
            <person name="Kawai J."/>
            <person name="Hayashizaki Y."/>
        </authorList>
    </citation>
    <scope>NUCLEOTIDE SEQUENCE [LARGE SCALE MRNA] (ISOFORM 1)</scope>
    <source>
        <strain>C57BL/6J</strain>
        <tissue>Olfactory bulb</tissue>
        <tissue>Pituitary</tissue>
    </source>
</reference>
<reference key="4">
    <citation type="journal article" date="2004" name="Genome Res.">
        <title>The status, quality, and expansion of the NIH full-length cDNA project: the Mammalian Gene Collection (MGC).</title>
        <authorList>
            <consortium name="The MGC Project Team"/>
        </authorList>
    </citation>
    <scope>NUCLEOTIDE SEQUENCE [LARGE SCALE MRNA] (ISOFORM 2)</scope>
    <source>
        <tissue>Olfactory epithelium</tissue>
    </source>
</reference>
<reference key="5">
    <citation type="journal article" date="2001" name="J. Biol. Chem.">
        <title>Association of a novel PDZ domain-containing peripheral Golgi protein with the Q-SNARE (Q-soluble N-ethylmaleimide-sensitive fusion protein (NSF) attachment protein receptor) protein syntaxin 6.</title>
        <authorList>
            <person name="Charest A."/>
            <person name="Lane K."/>
            <person name="McMahon K."/>
            <person name="Housman D.E."/>
        </authorList>
    </citation>
    <scope>TISSUE SPECIFICITY</scope>
</reference>
<reference key="6">
    <citation type="journal article" date="2002" name="Neuron">
        <title>A novel protein complex linking the delta 2 glutamate receptor and autophagy: implications for neurodegeneration in lurcher mice.</title>
        <authorList>
            <person name="Yue Z."/>
            <person name="Horton A."/>
            <person name="Bravin M."/>
            <person name="DeJager P.L."/>
            <person name="Selimi F."/>
            <person name="Heintz N."/>
        </authorList>
    </citation>
    <scope>FUNCTION</scope>
    <scope>TISSUE SPECIFICITY</scope>
    <scope>DEVELOPMENTAL STAGE</scope>
    <scope>SUBCELLULAR LOCATION</scope>
    <scope>DOMAIN</scope>
    <scope>INTERACTION WITH GRID2 AND BECN1</scope>
</reference>
<reference key="7">
    <citation type="journal article" date="2002" name="Proc. Natl. Acad. Sci. U.S.A.">
        <title>Lack of acrosome formation in mice lacking a Golgi protein, GOPC.</title>
        <authorList>
            <person name="Yao R."/>
            <person name="Ito C."/>
            <person name="Natsume Y."/>
            <person name="Sugitani Y."/>
            <person name="Yamanaka H."/>
            <person name="Kuretake S."/>
            <person name="Yanagida K."/>
            <person name="Sato A."/>
            <person name="Toshimori K."/>
            <person name="Noda T."/>
        </authorList>
    </citation>
    <scope>TISSUE SPECIFICITY</scope>
    <scope>SUBCELLULAR LOCATION</scope>
    <scope>FUNCTION</scope>
    <scope>DISRUPTION PHENOTYPE</scope>
</reference>
<reference key="8">
    <citation type="journal article" date="2003" name="J. Biol. Chem.">
        <title>The PDZ-binding chloride channel ClC-3B localizes to the Golgi and associates with cystic fibrosis transmembrane conductance regulator-interacting PDZ proteins.</title>
        <authorList>
            <person name="Gentzsch M."/>
            <person name="Cui L."/>
            <person name="Mengos A."/>
            <person name="Chang X.-B."/>
            <person name="Chen J.-H."/>
            <person name="Riordan J.R."/>
        </authorList>
    </citation>
    <scope>INTERACTION WITH CLCN3 AND CFTR</scope>
    <scope>DOMAIN</scope>
</reference>
<reference key="9">
    <citation type="journal article" date="2003" name="J. Biol. Chem.">
        <title>CALEB/NGC interacts with the Golgi-associated protein PIST.</title>
        <authorList>
            <person name="Hassel B."/>
            <person name="Schreff M."/>
            <person name="Stuebe E.-M."/>
            <person name="Blaich U."/>
            <person name="Schumacher S."/>
        </authorList>
    </citation>
    <scope>INTERACTION WITH CSPG5</scope>
    <scope>SUBCELLULAR LOCATION</scope>
</reference>
<reference key="10">
    <citation type="journal article" date="2004" name="J. Biol. Chem.">
        <title>Microtubule-associated protein light chain 2 is a stargazin-AMPA receptor complex-interacting protein in vivo.</title>
        <authorList>
            <person name="Ives J.H."/>
            <person name="Fung S."/>
            <person name="Tiwari P."/>
            <person name="Payne H.L."/>
            <person name="Thompson C.L."/>
        </authorList>
    </citation>
    <scope>INTERACTION WITH CACNG2</scope>
</reference>
<reference key="11">
    <citation type="journal article" date="2004" name="J. Biol. Chem.">
        <title>PSD-95 and Lin-7b interact with acid-sensing ion channel-3 and have opposite effects on H+- gated current.</title>
        <authorList>
            <person name="Hruska-Hageman A.M."/>
            <person name="Benson C.J."/>
            <person name="Leonard A.S."/>
            <person name="Price M.P."/>
            <person name="Welsh M.J."/>
        </authorList>
    </citation>
    <scope>INTERACTION WITH ASIC3</scope>
    <scope>TISSUE SPECIFICITY</scope>
    <scope>SUBCELLULAR LOCATION</scope>
    <scope>FUNCTION</scope>
</reference>
<reference key="12">
    <citation type="journal article" date="2006" name="Mol. Cell. Proteomics">
        <title>Comprehensive identification of phosphorylation sites in postsynaptic density preparations.</title>
        <authorList>
            <person name="Trinidad J.C."/>
            <person name="Specht C.G."/>
            <person name="Thalhammer A."/>
            <person name="Schoepfer R."/>
            <person name="Burlingame A.L."/>
        </authorList>
    </citation>
    <scope>IDENTIFICATION BY MASS SPECTROMETRY [LARGE SCALE ANALYSIS]</scope>
    <source>
        <tissue>Brain</tissue>
    </source>
</reference>
<reference key="13">
    <citation type="journal article" date="2010" name="Cell">
        <title>A tissue-specific atlas of mouse protein phosphorylation and expression.</title>
        <authorList>
            <person name="Huttlin E.L."/>
            <person name="Jedrychowski M.P."/>
            <person name="Elias J.E."/>
            <person name="Goswami T."/>
            <person name="Rad R."/>
            <person name="Beausoleil S.A."/>
            <person name="Villen J."/>
            <person name="Haas W."/>
            <person name="Sowa M.E."/>
            <person name="Gygi S.P."/>
        </authorList>
    </citation>
    <scope>PHOSPHORYLATION [LARGE SCALE ANALYSIS] AT SER-402 AND SER-405</scope>
    <scope>IDENTIFICATION BY MASS SPECTROMETRY [LARGE SCALE ANALYSIS]</scope>
    <source>
        <tissue>Kidney</tissue>
        <tissue>Testis</tissue>
    </source>
</reference>
<reference key="14">
    <citation type="journal article" date="2017" name="Biol. Reprod.">
        <title>A nonsense mutation in Ccdc62 gene is responsible for spermiogenesis defects and male infertility in repro29/repro29 mice.</title>
        <authorList>
            <person name="Li Y."/>
            <person name="Li C."/>
            <person name="Lin S."/>
            <person name="Yang B."/>
            <person name="Huang W."/>
            <person name="Wu H."/>
            <person name="Chen Y."/>
            <person name="Yang L."/>
            <person name="Luo M."/>
            <person name="Guo H."/>
            <person name="Chen J."/>
            <person name="Wang T."/>
            <person name="Ma Q."/>
            <person name="Gu Y."/>
            <person name="Mou L."/>
            <person name="Jiang Z."/>
            <person name="Xia J."/>
            <person name="Gui Y."/>
        </authorList>
    </citation>
    <scope>INTERACTION WITH CCDC62</scope>
</reference>
<sequence>MSAGGPCPAGAGGGPGGSSCPVGVSPGGVSMFRWLEVLEKEFDKAFVDVDLLLGEIDPDQADITYEGRQKMTSLSSCFAQLCHKAQTVSQINHKLEAQLVDLRSELTETQAEKVVLEKEVHEQLLQLHSTQLQLHAKTGQSVDSGAIKAKLSVHSVEDLERELEANKTEKVKEARLEAEVKLLRKENEALRRHIAVLQAEVYGARLAAKYLDKELAGRVQQIQLLGRDMKGPAHDKLWNQLEAEIHLHRHKTVIRACRGRNDLKRPMQAPPGHDQDSLKKSQGVGPIRKVLLLKEDHEGLGISITGGKEHGVPILISEIHPGQPADRCGGLHVGDAILAVNGVNLRDTKHKEAVTILSQQRGEIEFEVVYVAPEVDSDDENVEYEDESGHRYRLYLDELEGSGNSGASCKDSSGEMKMLQGYNKKAVRDAHENGDVGAAGESPLDDTAARAAHLHSLHQKKAY</sequence>
<gene>
    <name evidence="18" type="primary">Gopc</name>
    <name evidence="2" type="synonym">Cal</name>
</gene>
<name>GOPC_MOUSE</name>
<keyword id="KW-0007">Acetylation</keyword>
<keyword id="KW-0025">Alternative splicing</keyword>
<keyword id="KW-0966">Cell projection</keyword>
<keyword id="KW-0175">Coiled coil</keyword>
<keyword id="KW-0963">Cytoplasm</keyword>
<keyword id="KW-0333">Golgi apparatus</keyword>
<keyword id="KW-0472">Membrane</keyword>
<keyword id="KW-0597">Phosphoprotein</keyword>
<keyword id="KW-0653">Protein transport</keyword>
<keyword id="KW-1185">Reference proteome</keyword>
<keyword id="KW-0770">Synapse</keyword>
<keyword id="KW-0813">Transport</keyword>
<feature type="initiator methionine" description="Removed" evidence="2">
    <location>
        <position position="1"/>
    </location>
</feature>
<feature type="chain" id="PRO_0000087543" description="Golgi-associated PDZ and coiled-coil motif-containing protein">
    <location>
        <begin position="2"/>
        <end position="463"/>
    </location>
</feature>
<feature type="domain" description="PDZ" evidence="4">
    <location>
        <begin position="289"/>
        <end position="372"/>
    </location>
</feature>
<feature type="coiled-coil region" evidence="3">
    <location>
        <begin position="85"/>
        <end position="201"/>
    </location>
</feature>
<feature type="modified residue" description="N-acetylserine" evidence="2">
    <location>
        <position position="2"/>
    </location>
</feature>
<feature type="modified residue" description="Phosphoserine" evidence="19">
    <location>
        <position position="402"/>
    </location>
</feature>
<feature type="modified residue" description="Phosphoserine" evidence="19">
    <location>
        <position position="405"/>
    </location>
</feature>
<feature type="splice variant" id="VSP_016065" description="In isoform 2." evidence="15 16 17">
    <location>
        <begin position="151"/>
        <end position="158"/>
    </location>
</feature>
<dbReference type="EMBL" id="AF287893">
    <property type="protein sequence ID" value="AAG00571.1"/>
    <property type="molecule type" value="mRNA"/>
</dbReference>
<dbReference type="EMBL" id="AB052838">
    <property type="protein sequence ID" value="BAB69946.1"/>
    <property type="molecule type" value="mRNA"/>
</dbReference>
<dbReference type="EMBL" id="AK030427">
    <property type="protein sequence ID" value="BAC26958.1"/>
    <property type="molecule type" value="mRNA"/>
</dbReference>
<dbReference type="EMBL" id="AK030637">
    <property type="protein sequence ID" value="BAC27058.1"/>
    <property type="molecule type" value="mRNA"/>
</dbReference>
<dbReference type="EMBL" id="AK032613">
    <property type="protein sequence ID" value="BAC27951.1"/>
    <property type="molecule type" value="mRNA"/>
</dbReference>
<dbReference type="EMBL" id="BC051171">
    <property type="protein sequence ID" value="AAH51171.1"/>
    <property type="molecule type" value="mRNA"/>
</dbReference>
<dbReference type="CCDS" id="CCDS35898.1">
    <molecule id="Q8BH60-2"/>
</dbReference>
<dbReference type="RefSeq" id="NP_001186201.1">
    <molecule id="Q8BH60-1"/>
    <property type="nucleotide sequence ID" value="NM_001199272.1"/>
</dbReference>
<dbReference type="RefSeq" id="NP_444417.2">
    <molecule id="Q8BH60-2"/>
    <property type="nucleotide sequence ID" value="NM_053187.3"/>
</dbReference>
<dbReference type="BMRB" id="Q8BH60"/>
<dbReference type="SMR" id="Q8BH60"/>
<dbReference type="BioGRID" id="220478">
    <property type="interactions" value="16"/>
</dbReference>
<dbReference type="FunCoup" id="Q8BH60">
    <property type="interactions" value="3405"/>
</dbReference>
<dbReference type="IntAct" id="Q8BH60">
    <property type="interactions" value="11"/>
</dbReference>
<dbReference type="MINT" id="Q8BH60"/>
<dbReference type="STRING" id="10090.ENSMUSP00000020008"/>
<dbReference type="iPTMnet" id="Q8BH60"/>
<dbReference type="PhosphoSitePlus" id="Q8BH60"/>
<dbReference type="CPTAC" id="non-CPTAC-3814"/>
<dbReference type="jPOST" id="Q8BH60"/>
<dbReference type="PaxDb" id="10090-ENSMUSP00000101115"/>
<dbReference type="ProteomicsDB" id="271130">
    <molecule id="Q8BH60-1"/>
</dbReference>
<dbReference type="ProteomicsDB" id="271131">
    <molecule id="Q8BH60-2"/>
</dbReference>
<dbReference type="Pumba" id="Q8BH60"/>
<dbReference type="Ensembl" id="ENSMUST00000020008.10">
    <molecule id="Q8BH60-2"/>
    <property type="protein sequence ID" value="ENSMUSP00000020008.9"/>
    <property type="gene ID" value="ENSMUSG00000019861.16"/>
</dbReference>
<dbReference type="GeneID" id="94221"/>
<dbReference type="KEGG" id="mmu:94221"/>
<dbReference type="UCSC" id="uc007fbf.2">
    <molecule id="Q8BH60-2"/>
    <property type="organism name" value="mouse"/>
</dbReference>
<dbReference type="UCSC" id="uc007fbg.2">
    <molecule id="Q8BH60-1"/>
    <property type="organism name" value="mouse"/>
</dbReference>
<dbReference type="AGR" id="MGI:2149946"/>
<dbReference type="CTD" id="57120"/>
<dbReference type="MGI" id="MGI:2149946">
    <property type="gene designation" value="Gopc"/>
</dbReference>
<dbReference type="VEuPathDB" id="HostDB:ENSMUSG00000019861"/>
<dbReference type="eggNOG" id="KOG3528">
    <property type="taxonomic scope" value="Eukaryota"/>
</dbReference>
<dbReference type="GeneTree" id="ENSGT00940000156535"/>
<dbReference type="HOGENOM" id="CLU_045744_0_0_1"/>
<dbReference type="InParanoid" id="Q8BH60"/>
<dbReference type="OMA" id="QCNLRQE"/>
<dbReference type="OrthoDB" id="50228at9989"/>
<dbReference type="PhylomeDB" id="Q8BH60"/>
<dbReference type="Reactome" id="R-MMU-5627083">
    <property type="pathway name" value="RHO GTPases regulate CFTR trafficking"/>
</dbReference>
<dbReference type="Reactome" id="R-MMU-9013406">
    <property type="pathway name" value="RHOQ GTPase cycle"/>
</dbReference>
<dbReference type="BioGRID-ORCS" id="94221">
    <property type="hits" value="2 hits in 76 CRISPR screens"/>
</dbReference>
<dbReference type="ChiTaRS" id="Gopc">
    <property type="organism name" value="mouse"/>
</dbReference>
<dbReference type="PRO" id="PR:Q8BH60"/>
<dbReference type="Proteomes" id="UP000000589">
    <property type="component" value="Chromosome 10"/>
</dbReference>
<dbReference type="RNAct" id="Q8BH60">
    <property type="molecule type" value="protein"/>
</dbReference>
<dbReference type="Bgee" id="ENSMUSG00000019861">
    <property type="expression patterns" value="Expressed in trigeminal ganglion and 242 other cell types or tissues"/>
</dbReference>
<dbReference type="ExpressionAtlas" id="Q8BH60">
    <property type="expression patterns" value="baseline and differential"/>
</dbReference>
<dbReference type="GO" id="GO:0005737">
    <property type="term" value="C:cytoplasm"/>
    <property type="evidence" value="ECO:0000250"/>
    <property type="project" value="UniProtKB"/>
</dbReference>
<dbReference type="GO" id="GO:0030425">
    <property type="term" value="C:dendrite"/>
    <property type="evidence" value="ECO:0007669"/>
    <property type="project" value="UniProtKB-SubCell"/>
</dbReference>
<dbReference type="GO" id="GO:0005794">
    <property type="term" value="C:Golgi apparatus"/>
    <property type="evidence" value="ECO:0000314"/>
    <property type="project" value="BHF-UCL"/>
</dbReference>
<dbReference type="GO" id="GO:0000139">
    <property type="term" value="C:Golgi membrane"/>
    <property type="evidence" value="ECO:0007669"/>
    <property type="project" value="UniProtKB-SubCell"/>
</dbReference>
<dbReference type="GO" id="GO:0016020">
    <property type="term" value="C:membrane"/>
    <property type="evidence" value="ECO:0000250"/>
    <property type="project" value="UniProtKB"/>
</dbReference>
<dbReference type="GO" id="GO:0005886">
    <property type="term" value="C:plasma membrane"/>
    <property type="evidence" value="ECO:0000314"/>
    <property type="project" value="BHF-UCL"/>
</dbReference>
<dbReference type="GO" id="GO:0014069">
    <property type="term" value="C:postsynaptic density"/>
    <property type="evidence" value="ECO:0007669"/>
    <property type="project" value="UniProtKB-SubCell"/>
</dbReference>
<dbReference type="GO" id="GO:0032991">
    <property type="term" value="C:protein-containing complex"/>
    <property type="evidence" value="ECO:0000266"/>
    <property type="project" value="MGI"/>
</dbReference>
<dbReference type="GO" id="GO:0045202">
    <property type="term" value="C:synapse"/>
    <property type="evidence" value="ECO:0000314"/>
    <property type="project" value="MGI"/>
</dbReference>
<dbReference type="GO" id="GO:0030140">
    <property type="term" value="C:trans-Golgi network transport vesicle"/>
    <property type="evidence" value="ECO:0000250"/>
    <property type="project" value="UniProtKB"/>
</dbReference>
<dbReference type="GO" id="GO:0005109">
    <property type="term" value="F:frizzled binding"/>
    <property type="evidence" value="ECO:0000353"/>
    <property type="project" value="BHF-UCL"/>
</dbReference>
<dbReference type="GO" id="GO:0030695">
    <property type="term" value="F:GTPase regulator activity"/>
    <property type="evidence" value="ECO:0000314"/>
    <property type="project" value="MGI"/>
</dbReference>
<dbReference type="GO" id="GO:0042802">
    <property type="term" value="F:identical protein binding"/>
    <property type="evidence" value="ECO:0000250"/>
    <property type="project" value="UniProtKB"/>
</dbReference>
<dbReference type="GO" id="GO:0042803">
    <property type="term" value="F:protein homodimerization activity"/>
    <property type="evidence" value="ECO:0000353"/>
    <property type="project" value="BHF-UCL"/>
</dbReference>
<dbReference type="GO" id="GO:0019905">
    <property type="term" value="F:syntaxin binding"/>
    <property type="evidence" value="ECO:0000250"/>
    <property type="project" value="UniProtKB"/>
</dbReference>
<dbReference type="GO" id="GO:0044325">
    <property type="term" value="F:transmembrane transporter binding"/>
    <property type="evidence" value="ECO:0000250"/>
    <property type="project" value="UniProtKB"/>
</dbReference>
<dbReference type="GO" id="GO:0006914">
    <property type="term" value="P:autophagy"/>
    <property type="evidence" value="ECO:0000304"/>
    <property type="project" value="UniProtKB"/>
</dbReference>
<dbReference type="GO" id="GO:0015031">
    <property type="term" value="P:protein transport"/>
    <property type="evidence" value="ECO:0007669"/>
    <property type="project" value="UniProtKB-KW"/>
</dbReference>
<dbReference type="GO" id="GO:0007289">
    <property type="term" value="P:spermatid nucleus differentiation"/>
    <property type="evidence" value="ECO:0000315"/>
    <property type="project" value="MGI"/>
</dbReference>
<dbReference type="CDD" id="cd14686">
    <property type="entry name" value="bZIP"/>
    <property type="match status" value="1"/>
</dbReference>
<dbReference type="CDD" id="cd06800">
    <property type="entry name" value="PDZ_GOPC-like"/>
    <property type="match status" value="1"/>
</dbReference>
<dbReference type="FunFam" id="2.30.42.10:FF:000067">
    <property type="entry name" value="Golgi-associated PDZ and coiled-coil motif-containing protein-like"/>
    <property type="match status" value="1"/>
</dbReference>
<dbReference type="Gene3D" id="2.30.42.10">
    <property type="match status" value="1"/>
</dbReference>
<dbReference type="InterPro" id="IPR038879">
    <property type="entry name" value="GOPC"/>
</dbReference>
<dbReference type="InterPro" id="IPR001478">
    <property type="entry name" value="PDZ"/>
</dbReference>
<dbReference type="InterPro" id="IPR036034">
    <property type="entry name" value="PDZ_sf"/>
</dbReference>
<dbReference type="PANTHER" id="PTHR16528">
    <property type="entry name" value="GOLGI-ASSOCIATED PDZ AND COILED-COIL MOTIF-CONTAINING"/>
    <property type="match status" value="1"/>
</dbReference>
<dbReference type="PANTHER" id="PTHR16528:SF2">
    <property type="entry name" value="GOLGI-ASSOCIATED PDZ AND COILED-COIL MOTIF-CONTAINING PROTEIN"/>
    <property type="match status" value="1"/>
</dbReference>
<dbReference type="Pfam" id="PF00595">
    <property type="entry name" value="PDZ"/>
    <property type="match status" value="1"/>
</dbReference>
<dbReference type="SMART" id="SM00228">
    <property type="entry name" value="PDZ"/>
    <property type="match status" value="1"/>
</dbReference>
<dbReference type="SUPFAM" id="SSF50156">
    <property type="entry name" value="PDZ domain-like"/>
    <property type="match status" value="1"/>
</dbReference>
<dbReference type="PROSITE" id="PS50106">
    <property type="entry name" value="PDZ"/>
    <property type="match status" value="1"/>
</dbReference>
<comment type="function">
    <text evidence="2 8 9 13">Plays a role in intracellular protein trafficking and degradation (PubMed:12149515). May regulate CFTR chloride currents and acid-induced ASIC3 currents by modulating cell surface expression of both channels (PubMed:15317815). May also regulate the intracellular trafficking of the ADR1B receptor (By similarity). May play a role in autophagy (PubMed:12372286). Together with MARCHF2 mediates the ubiquitination and lysosomal degradation of CFTR (By similarity). Overexpression results in CFTR intracellular retention and degradation in the lysosomes (By similarity).</text>
</comment>
<comment type="subunit">
    <text evidence="2 5 7 9 10 11 12 13 14">Homooligomer (PubMed:11162552). Interacts with FZD5 (PubMed:11520064). Interacts with FZD8 (PubMed:11520064). Interacts with GRID2 and BECN1 (PubMed:12372286). Interacts with CSPG5 (PubMed:12885772). Interacts with CLCN3 (PubMed:12471024). Interacts with STX6 (By similarity). Interacts with CFTR (PubMed:12471024). Interacts with ASIC3 (PubMed:15317815). Interacts with GOLGA3 (By similarity). Interacts with NLGN1 (By similarity). Interacts with RHOQ (PubMed:11162552). Interacts with MARCHF2; the interaction leads to CFTR ubiquitination and degradation (By similarity). May interact with CACNG2 (PubMed:15136571). Interacts with CCDC62 (PubMed:28339613).</text>
</comment>
<comment type="interaction">
    <interactant intactId="EBI-296357">
        <id>Q8BH60</id>
    </interactant>
    <interactant intactId="EBI-643716">
        <id>O88597</id>
        <label>Becn1</label>
    </interactant>
    <organismsDiffer>false</organismsDiffer>
    <experiments>5</experiments>
</comment>
<comment type="interaction">
    <interactant intactId="EBI-296357">
        <id>Q8BH60</id>
    </interactant>
    <interactant intactId="EBI-7938232">
        <id>Q9EQD0</id>
        <label>Fzd5</label>
    </interactant>
    <organismsDiffer>false</organismsDiffer>
    <experiments>3</experiments>
</comment>
<comment type="interaction">
    <interactant intactId="EBI-296357">
        <id>Q8BH60</id>
    </interactant>
    <interactant intactId="EBI-6171689">
        <id>Q61091</id>
        <label>Fzd8</label>
    </interactant>
    <organismsDiffer>false</organismsDiffer>
    <experiments>3</experiments>
</comment>
<comment type="interaction">
    <interactant intactId="EBI-296357">
        <id>Q8BH60</id>
    </interactant>
    <interactant intactId="EBI-2794106">
        <id>Q61625</id>
        <label>Grid2</label>
    </interactant>
    <organismsDiffer>false</organismsDiffer>
    <experiments>5</experiments>
</comment>
<comment type="interaction">
    <interactant intactId="EBI-296357">
        <id>Q8BH60</id>
    </interactant>
    <interactant intactId="EBI-296349">
        <id>O95196</id>
        <label>CSPG5</label>
    </interactant>
    <organismsDiffer>true</organismsDiffer>
    <experiments>3</experiments>
</comment>
<comment type="subcellular location">
    <subcellularLocation>
        <location>Cytoplasm</location>
    </subcellularLocation>
    <subcellularLocation>
        <location>Golgi apparatus membrane</location>
        <topology>Peripheral membrane protein</topology>
    </subcellularLocation>
    <subcellularLocation>
        <location>Golgi apparatus</location>
        <location>trans-Golgi network membrane</location>
        <topology>Peripheral membrane protein</topology>
    </subcellularLocation>
    <subcellularLocation>
        <location>Synapse</location>
    </subcellularLocation>
    <subcellularLocation>
        <location>Postsynaptic density</location>
    </subcellularLocation>
    <subcellularLocation>
        <location>Cell projection</location>
        <location>Dendrite</location>
    </subcellularLocation>
    <text>Enriched in synaptosomal and postsynaptic densities (PSD) fractions. Expressed in cell bodies and dendrites of Purkinje cells. Localized at the trans-Golgi network (TGN) of spermatids and the medulla of round spermatides.</text>
</comment>
<comment type="alternative products">
    <event type="alternative splicing"/>
    <isoform>
        <id>Q8BH60-1</id>
        <name>1</name>
        <name>NPIST</name>
        <name>Beta</name>
        <sequence type="displayed"/>
    </isoform>
    <isoform>
        <id>Q8BH60-2</id>
        <name>2</name>
        <name>Alpha</name>
        <sequence type="described" ref="VSP_016065"/>
    </isoform>
</comment>
<comment type="tissue specificity">
    <text evidence="6 8 9 13">Ubiquitously expressed (at protein level). Expressed in dorsal root glanglion (DRG), spinal cord and brain. Isoform 1 is preferentially expressed in whole brain (at protein level) and cerebellum. Expressed in spermatocytes and spermatides but not in Sertoli cells and spermatogonia.</text>
</comment>
<comment type="developmental stage">
    <text evidence="9">In the cerebellum, expression increases post-natally, following maturation of this tissue (at protein level).</text>
</comment>
<comment type="domain">
    <text evidence="1">The coiled-coil region probably mediates targeting to the Golgi, oligomerization and interaction with RHOQ. May also mediates association to membranes and interactions with GOLGA3 and STX6 (By similarity).</text>
</comment>
<comment type="domain">
    <text evidence="1 7 9 10">The PDZ domain mediates interaction with ADRB1 (By similarity). Also mediates interactions with FZD5, FZD8, ASIC3, GRID2, CFTR, CLCN3.</text>
</comment>
<comment type="disruption phenotype">
    <text evidence="8">Male mice are infertile with globozoospermia. Spermatozoa display a default in acrosome formation and are unable to activate oocytes.</text>
</comment>
<accession>Q8BH60</accession>
<accession>Q8BSV4</accession>
<accession>Q920R1</accession>
<accession>Q9ET11</accession>
<proteinExistence type="evidence at protein level"/>
<organism>
    <name type="scientific">Mus musculus</name>
    <name type="common">Mouse</name>
    <dbReference type="NCBI Taxonomy" id="10090"/>
    <lineage>
        <taxon>Eukaryota</taxon>
        <taxon>Metazoa</taxon>
        <taxon>Chordata</taxon>
        <taxon>Craniata</taxon>
        <taxon>Vertebrata</taxon>
        <taxon>Euteleostomi</taxon>
        <taxon>Mammalia</taxon>
        <taxon>Eutheria</taxon>
        <taxon>Euarchontoglires</taxon>
        <taxon>Glires</taxon>
        <taxon>Rodentia</taxon>
        <taxon>Myomorpha</taxon>
        <taxon>Muroidea</taxon>
        <taxon>Muridae</taxon>
        <taxon>Murinae</taxon>
        <taxon>Mus</taxon>
        <taxon>Mus</taxon>
    </lineage>
</organism>
<protein>
    <recommendedName>
        <fullName evidence="18">Golgi-associated PDZ and coiled-coil motif-containing protein</fullName>
    </recommendedName>
    <alternativeName>
        <fullName evidence="2">CFTR-associated ligand</fullName>
    </alternativeName>
    <alternativeName>
        <fullName evidence="2">PDZ protein interacting specifically with TC10</fullName>
        <shortName evidence="2">PIST</shortName>
    </alternativeName>
</protein>
<evidence type="ECO:0000250" key="1"/>
<evidence type="ECO:0000250" key="2">
    <source>
        <dbReference type="UniProtKB" id="Q9HD26"/>
    </source>
</evidence>
<evidence type="ECO:0000255" key="3"/>
<evidence type="ECO:0000255" key="4">
    <source>
        <dbReference type="PROSITE-ProRule" id="PRU00143"/>
    </source>
</evidence>
<evidence type="ECO:0000269" key="5">
    <source>
    </source>
</evidence>
<evidence type="ECO:0000269" key="6">
    <source>
    </source>
</evidence>
<evidence type="ECO:0000269" key="7">
    <source>
    </source>
</evidence>
<evidence type="ECO:0000269" key="8">
    <source>
    </source>
</evidence>
<evidence type="ECO:0000269" key="9">
    <source>
    </source>
</evidence>
<evidence type="ECO:0000269" key="10">
    <source>
    </source>
</evidence>
<evidence type="ECO:0000269" key="11">
    <source>
    </source>
</evidence>
<evidence type="ECO:0000269" key="12">
    <source>
    </source>
</evidence>
<evidence type="ECO:0000269" key="13">
    <source>
    </source>
</evidence>
<evidence type="ECO:0000269" key="14">
    <source>
    </source>
</evidence>
<evidence type="ECO:0000303" key="15">
    <source>
    </source>
</evidence>
<evidence type="ECO:0000303" key="16">
    <source>
    </source>
</evidence>
<evidence type="ECO:0000303" key="17">
    <source>
    </source>
</evidence>
<evidence type="ECO:0000312" key="18">
    <source>
        <dbReference type="MGI" id="MGI:2149946"/>
    </source>
</evidence>
<evidence type="ECO:0007744" key="19">
    <source>
    </source>
</evidence>